<comment type="function">
    <text evidence="1">Required for correct meiotic chromosome segregation.</text>
</comment>
<comment type="subcellular location">
    <subcellularLocation>
        <location evidence="2">Cytoplasm</location>
    </subcellularLocation>
</comment>
<protein>
    <recommendedName>
        <fullName>Meiotically up-regulated gene 1 protein</fullName>
    </recommendedName>
</protein>
<accession>Q9USP4</accession>
<sequence length="351" mass="41248">MKEMINLDSSSEPSIVTKQFSVEECLSKLKEQHCYVPMRTIGRLRLRKSSDQTEKKCWKEKLMKIRSELEELWEQSMMYEEQKELTQLGEMLDRLWDKHINSEGSKSETISDTAISGNDDTMEKRLEQFSDDTLQDTLETEKNLNSKTSESLKSPTLSYPFDLDSLDKRIFKLESKIGYADEPLSELLNKCMEKLEIVEQDPQFWQSRIESWKQLLAKDFLKHHERNLCSIEKQTTLKNSSLKELCTEEDIVIMLEICSSQLPFVEQYMPILPLLLERLKSLQNMHTDAAEAISSWQGSKDVMMTMQSELNEWKNTVERLDHSKFYTQSVEEMRRLSDTVTQLEKRVLKLQ</sequence>
<evidence type="ECO:0000269" key="1">
    <source>
    </source>
</evidence>
<evidence type="ECO:0000269" key="2">
    <source>
    </source>
</evidence>
<feature type="chain" id="PRO_0000278483" description="Meiotically up-regulated gene 1 protein">
    <location>
        <begin position="1"/>
        <end position="351"/>
    </location>
</feature>
<reference key="1">
    <citation type="journal article" date="2002" name="Nature">
        <title>The genome sequence of Schizosaccharomyces pombe.</title>
        <authorList>
            <person name="Wood V."/>
            <person name="Gwilliam R."/>
            <person name="Rajandream M.A."/>
            <person name="Lyne M.H."/>
            <person name="Lyne R."/>
            <person name="Stewart A."/>
            <person name="Sgouros J.G."/>
            <person name="Peat N."/>
            <person name="Hayles J."/>
            <person name="Baker S.G."/>
            <person name="Basham D."/>
            <person name="Bowman S."/>
            <person name="Brooks K."/>
            <person name="Brown D."/>
            <person name="Brown S."/>
            <person name="Chillingworth T."/>
            <person name="Churcher C.M."/>
            <person name="Collins M."/>
            <person name="Connor R."/>
            <person name="Cronin A."/>
            <person name="Davis P."/>
            <person name="Feltwell T."/>
            <person name="Fraser A."/>
            <person name="Gentles S."/>
            <person name="Goble A."/>
            <person name="Hamlin N."/>
            <person name="Harris D.E."/>
            <person name="Hidalgo J."/>
            <person name="Hodgson G."/>
            <person name="Holroyd S."/>
            <person name="Hornsby T."/>
            <person name="Howarth S."/>
            <person name="Huckle E.J."/>
            <person name="Hunt S."/>
            <person name="Jagels K."/>
            <person name="James K.D."/>
            <person name="Jones L."/>
            <person name="Jones M."/>
            <person name="Leather S."/>
            <person name="McDonald S."/>
            <person name="McLean J."/>
            <person name="Mooney P."/>
            <person name="Moule S."/>
            <person name="Mungall K.L."/>
            <person name="Murphy L.D."/>
            <person name="Niblett D."/>
            <person name="Odell C."/>
            <person name="Oliver K."/>
            <person name="O'Neil S."/>
            <person name="Pearson D."/>
            <person name="Quail M.A."/>
            <person name="Rabbinowitsch E."/>
            <person name="Rutherford K.M."/>
            <person name="Rutter S."/>
            <person name="Saunders D."/>
            <person name="Seeger K."/>
            <person name="Sharp S."/>
            <person name="Skelton J."/>
            <person name="Simmonds M.N."/>
            <person name="Squares R."/>
            <person name="Squares S."/>
            <person name="Stevens K."/>
            <person name="Taylor K."/>
            <person name="Taylor R.G."/>
            <person name="Tivey A."/>
            <person name="Walsh S.V."/>
            <person name="Warren T."/>
            <person name="Whitehead S."/>
            <person name="Woodward J.R."/>
            <person name="Volckaert G."/>
            <person name="Aert R."/>
            <person name="Robben J."/>
            <person name="Grymonprez B."/>
            <person name="Weltjens I."/>
            <person name="Vanstreels E."/>
            <person name="Rieger M."/>
            <person name="Schaefer M."/>
            <person name="Mueller-Auer S."/>
            <person name="Gabel C."/>
            <person name="Fuchs M."/>
            <person name="Duesterhoeft A."/>
            <person name="Fritzc C."/>
            <person name="Holzer E."/>
            <person name="Moestl D."/>
            <person name="Hilbert H."/>
            <person name="Borzym K."/>
            <person name="Langer I."/>
            <person name="Beck A."/>
            <person name="Lehrach H."/>
            <person name="Reinhardt R."/>
            <person name="Pohl T.M."/>
            <person name="Eger P."/>
            <person name="Zimmermann W."/>
            <person name="Wedler H."/>
            <person name="Wambutt R."/>
            <person name="Purnelle B."/>
            <person name="Goffeau A."/>
            <person name="Cadieu E."/>
            <person name="Dreano S."/>
            <person name="Gloux S."/>
            <person name="Lelaure V."/>
            <person name="Mottier S."/>
            <person name="Galibert F."/>
            <person name="Aves S.J."/>
            <person name="Xiang Z."/>
            <person name="Hunt C."/>
            <person name="Moore K."/>
            <person name="Hurst S.M."/>
            <person name="Lucas M."/>
            <person name="Rochet M."/>
            <person name="Gaillardin C."/>
            <person name="Tallada V.A."/>
            <person name="Garzon A."/>
            <person name="Thode G."/>
            <person name="Daga R.R."/>
            <person name="Cruzado L."/>
            <person name="Jimenez J."/>
            <person name="Sanchez M."/>
            <person name="del Rey F."/>
            <person name="Benito J."/>
            <person name="Dominguez A."/>
            <person name="Revuelta J.L."/>
            <person name="Moreno S."/>
            <person name="Armstrong J."/>
            <person name="Forsburg S.L."/>
            <person name="Cerutti L."/>
            <person name="Lowe T."/>
            <person name="McCombie W.R."/>
            <person name="Paulsen I."/>
            <person name="Potashkin J."/>
            <person name="Shpakovski G.V."/>
            <person name="Ussery D."/>
            <person name="Barrell B.G."/>
            <person name="Nurse P."/>
        </authorList>
    </citation>
    <scope>NUCLEOTIDE SEQUENCE [LARGE SCALE GENOMIC DNA]</scope>
    <source>
        <strain>972 / ATCC 24843</strain>
    </source>
</reference>
<reference key="2">
    <citation type="journal article" date="2005" name="Curr. Biol.">
        <title>A large-scale screen in S. pombe identifies seven novel genes required for critical meiotic events.</title>
        <authorList>
            <person name="Martin-Castellanos C."/>
            <person name="Blanco M."/>
            <person name="Rozalen A.E."/>
            <person name="Perez-Hidalgo L."/>
            <person name="Garcia A.I."/>
            <person name="Conde F."/>
            <person name="Mata J."/>
            <person name="Ellermeier C."/>
            <person name="Davis L."/>
            <person name="San-Segundo P."/>
            <person name="Smith G.R."/>
            <person name="Moreno S."/>
        </authorList>
    </citation>
    <scope>FUNCTION IN MEIOSIS</scope>
</reference>
<reference key="3">
    <citation type="journal article" date="2006" name="Nat. Biotechnol.">
        <title>ORFeome cloning and global analysis of protein localization in the fission yeast Schizosaccharomyces pombe.</title>
        <authorList>
            <person name="Matsuyama A."/>
            <person name="Arai R."/>
            <person name="Yashiroda Y."/>
            <person name="Shirai A."/>
            <person name="Kamata A."/>
            <person name="Sekido S."/>
            <person name="Kobayashi Y."/>
            <person name="Hashimoto A."/>
            <person name="Hamamoto M."/>
            <person name="Hiraoka Y."/>
            <person name="Horinouchi S."/>
            <person name="Yoshida M."/>
        </authorList>
    </citation>
    <scope>SUBCELLULAR LOCATION [LARGE SCALE ANALYSIS]</scope>
</reference>
<gene>
    <name type="primary">mug1</name>
    <name type="ORF">SPCC11E10.03</name>
</gene>
<name>MUG1_SCHPO</name>
<proteinExistence type="evidence at protein level"/>
<keyword id="KW-0159">Chromosome partition</keyword>
<keyword id="KW-0963">Cytoplasm</keyword>
<keyword id="KW-0469">Meiosis</keyword>
<keyword id="KW-1185">Reference proteome</keyword>
<organism>
    <name type="scientific">Schizosaccharomyces pombe (strain 972 / ATCC 24843)</name>
    <name type="common">Fission yeast</name>
    <dbReference type="NCBI Taxonomy" id="284812"/>
    <lineage>
        <taxon>Eukaryota</taxon>
        <taxon>Fungi</taxon>
        <taxon>Dikarya</taxon>
        <taxon>Ascomycota</taxon>
        <taxon>Taphrinomycotina</taxon>
        <taxon>Schizosaccharomycetes</taxon>
        <taxon>Schizosaccharomycetales</taxon>
        <taxon>Schizosaccharomycetaceae</taxon>
        <taxon>Schizosaccharomyces</taxon>
    </lineage>
</organism>
<dbReference type="EMBL" id="CU329672">
    <property type="protein sequence ID" value="CAB57845.1"/>
    <property type="molecule type" value="Genomic_DNA"/>
</dbReference>
<dbReference type="PIR" id="T40854">
    <property type="entry name" value="T40854"/>
</dbReference>
<dbReference type="RefSeq" id="NP_588199.1">
    <property type="nucleotide sequence ID" value="NM_001023189.2"/>
</dbReference>
<dbReference type="SMR" id="Q9USP4"/>
<dbReference type="BioGRID" id="275457">
    <property type="interactions" value="5"/>
</dbReference>
<dbReference type="FunCoup" id="Q9USP4">
    <property type="interactions" value="23"/>
</dbReference>
<dbReference type="STRING" id="284812.Q9USP4"/>
<dbReference type="PaxDb" id="4896-SPCC11E10.03.1"/>
<dbReference type="EnsemblFungi" id="SPCC11E10.03.1">
    <property type="protein sequence ID" value="SPCC11E10.03.1:pep"/>
    <property type="gene ID" value="SPCC11E10.03"/>
</dbReference>
<dbReference type="GeneID" id="2538878"/>
<dbReference type="KEGG" id="spo:2538878"/>
<dbReference type="PomBase" id="SPCC11E10.03">
    <property type="gene designation" value="mug1"/>
</dbReference>
<dbReference type="VEuPathDB" id="FungiDB:SPCC11E10.03"/>
<dbReference type="HOGENOM" id="CLU_790256_0_0_1"/>
<dbReference type="InParanoid" id="Q9USP4"/>
<dbReference type="OMA" id="AETMNRW"/>
<dbReference type="PhylomeDB" id="Q9USP4"/>
<dbReference type="PRO" id="PR:Q9USP4"/>
<dbReference type="Proteomes" id="UP000002485">
    <property type="component" value="Chromosome III"/>
</dbReference>
<dbReference type="GO" id="GO:0005737">
    <property type="term" value="C:cytoplasm"/>
    <property type="evidence" value="ECO:0007005"/>
    <property type="project" value="PomBase"/>
</dbReference>
<dbReference type="GO" id="GO:0005829">
    <property type="term" value="C:cytosol"/>
    <property type="evidence" value="ECO:0007005"/>
    <property type="project" value="PomBase"/>
</dbReference>
<dbReference type="GO" id="GO:0005869">
    <property type="term" value="C:dynactin complex"/>
    <property type="evidence" value="ECO:0000353"/>
    <property type="project" value="PomBase"/>
</dbReference>
<dbReference type="GO" id="GO:0007059">
    <property type="term" value="P:chromosome segregation"/>
    <property type="evidence" value="ECO:0007669"/>
    <property type="project" value="UniProtKB-KW"/>
</dbReference>
<dbReference type="GO" id="GO:0030989">
    <property type="term" value="P:dynein-driven meiotic oscillatory nuclear movement"/>
    <property type="evidence" value="ECO:0000315"/>
    <property type="project" value="PomBase"/>
</dbReference>
<dbReference type="GO" id="GO:0007052">
    <property type="term" value="P:mitotic spindle organization"/>
    <property type="evidence" value="ECO:0000318"/>
    <property type="project" value="GO_Central"/>
</dbReference>
<dbReference type="GO" id="GO:0098863">
    <property type="term" value="P:nuclear migration by microtubule mediated pushing forces"/>
    <property type="evidence" value="ECO:0000305"/>
    <property type="project" value="PomBase"/>
</dbReference>
<dbReference type="InterPro" id="IPR028133">
    <property type="entry name" value="Dynamitin"/>
</dbReference>
<dbReference type="PANTHER" id="PTHR15346">
    <property type="entry name" value="DYNACTIN SUBUNIT"/>
    <property type="match status" value="1"/>
</dbReference>
<dbReference type="Pfam" id="PF04912">
    <property type="entry name" value="Dynamitin"/>
    <property type="match status" value="1"/>
</dbReference>